<gene>
    <name type="ordered locus">HI_0874</name>
</gene>
<sequence length="399" mass="45281">MIQEKHLTFTINLLVSLFFLTILIIPKGYNYAPIILSAIGLIYFIPLKKKLSFSSEDKKLIFSFLFYFFTFLLSIIINKDGIREIDNPSRLLLFIPLLLLFKNFPIKRKTILYAIPSSALITGCVALFQKFALGYEKPFPETMHIQMGNIAISLATFSIVITLHFFIKKQYKSTLFGFVAIILAIMTSALSGARGGWIGLPVVVGIILFLYKEFINKKLIITLIAIITIGLTALITSPKFGIEKRYNAAKSDIVSYLEKNNRNTSLGARFDMWENALIAIKEAPIFGHGSDGYDEFRHKQVKSKQMAKTTLNFGSLHNQYLESWVKRGLVGFIALILIILTPIFYFIKNLNTHNLETKCICILGIIHIVSHIFYFTSQSFLAHNSGNIFYFSAMLCFIV</sequence>
<evidence type="ECO:0000255" key="1"/>
<evidence type="ECO:0000305" key="2"/>
<keyword id="KW-1003">Cell membrane</keyword>
<keyword id="KW-0472">Membrane</keyword>
<keyword id="KW-1185">Reference proteome</keyword>
<keyword id="KW-0812">Transmembrane</keyword>
<keyword id="KW-1133">Transmembrane helix</keyword>
<accession>P44067</accession>
<reference key="1">
    <citation type="journal article" date="1995" name="Science">
        <title>Whole-genome random sequencing and assembly of Haemophilus influenzae Rd.</title>
        <authorList>
            <person name="Fleischmann R.D."/>
            <person name="Adams M.D."/>
            <person name="White O."/>
            <person name="Clayton R.A."/>
            <person name="Kirkness E.F."/>
            <person name="Kerlavage A.R."/>
            <person name="Bult C.J."/>
            <person name="Tomb J.-F."/>
            <person name="Dougherty B.A."/>
            <person name="Merrick J.M."/>
            <person name="McKenney K."/>
            <person name="Sutton G.G."/>
            <person name="FitzHugh W."/>
            <person name="Fields C.A."/>
            <person name="Gocayne J.D."/>
            <person name="Scott J.D."/>
            <person name="Shirley R."/>
            <person name="Liu L.-I."/>
            <person name="Glodek A."/>
            <person name="Kelley J.M."/>
            <person name="Weidman J.F."/>
            <person name="Phillips C.A."/>
            <person name="Spriggs T."/>
            <person name="Hedblom E."/>
            <person name="Cotton M.D."/>
            <person name="Utterback T.R."/>
            <person name="Hanna M.C."/>
            <person name="Nguyen D.T."/>
            <person name="Saudek D.M."/>
            <person name="Brandon R.C."/>
            <person name="Fine L.D."/>
            <person name="Fritchman J.L."/>
            <person name="Fuhrmann J.L."/>
            <person name="Geoghagen N.S.M."/>
            <person name="Gnehm C.L."/>
            <person name="McDonald L.A."/>
            <person name="Small K.V."/>
            <person name="Fraser C.M."/>
            <person name="Smith H.O."/>
            <person name="Venter J.C."/>
        </authorList>
    </citation>
    <scope>NUCLEOTIDE SEQUENCE [LARGE SCALE GENOMIC DNA]</scope>
    <source>
        <strain>ATCC 51907 / DSM 11121 / KW20 / Rd</strain>
    </source>
</reference>
<dbReference type="EMBL" id="L42023">
    <property type="protein sequence ID" value="AAC22538.1"/>
    <property type="molecule type" value="Genomic_DNA"/>
</dbReference>
<dbReference type="PIR" id="D64015">
    <property type="entry name" value="D64015"/>
</dbReference>
<dbReference type="RefSeq" id="NP_439035.1">
    <property type="nucleotide sequence ID" value="NC_000907.1"/>
</dbReference>
<dbReference type="SMR" id="P44067"/>
<dbReference type="STRING" id="71421.HI_0874"/>
<dbReference type="EnsemblBacteria" id="AAC22538">
    <property type="protein sequence ID" value="AAC22538"/>
    <property type="gene ID" value="HI_0874"/>
</dbReference>
<dbReference type="KEGG" id="hin:HI_0874"/>
<dbReference type="PATRIC" id="fig|71421.8.peg.915"/>
<dbReference type="eggNOG" id="COG3307">
    <property type="taxonomic scope" value="Bacteria"/>
</dbReference>
<dbReference type="HOGENOM" id="CLU_049451_0_1_6"/>
<dbReference type="OrthoDB" id="8576060at2"/>
<dbReference type="BioCyc" id="HINF71421:G1GJ1-914-MONOMER"/>
<dbReference type="Proteomes" id="UP000000579">
    <property type="component" value="Chromosome"/>
</dbReference>
<dbReference type="GO" id="GO:0005886">
    <property type="term" value="C:plasma membrane"/>
    <property type="evidence" value="ECO:0007669"/>
    <property type="project" value="UniProtKB-SubCell"/>
</dbReference>
<dbReference type="InterPro" id="IPR007016">
    <property type="entry name" value="O-antigen_ligase-rel_domated"/>
</dbReference>
<dbReference type="InterPro" id="IPR051533">
    <property type="entry name" value="WaaL-like"/>
</dbReference>
<dbReference type="PANTHER" id="PTHR37422:SF17">
    <property type="entry name" value="O-ANTIGEN LIGASE"/>
    <property type="match status" value="1"/>
</dbReference>
<dbReference type="PANTHER" id="PTHR37422">
    <property type="entry name" value="TEICHURONIC ACID BIOSYNTHESIS PROTEIN TUAE"/>
    <property type="match status" value="1"/>
</dbReference>
<dbReference type="Pfam" id="PF04932">
    <property type="entry name" value="Wzy_C"/>
    <property type="match status" value="1"/>
</dbReference>
<feature type="chain" id="PRO_0000077967" description="Uncharacterized protein HI_0874">
    <location>
        <begin position="1"/>
        <end position="399"/>
    </location>
</feature>
<feature type="transmembrane region" description="Helical" evidence="1">
    <location>
        <begin position="6"/>
        <end position="26"/>
    </location>
</feature>
<feature type="transmembrane region" description="Helical" evidence="1">
    <location>
        <begin position="27"/>
        <end position="47"/>
    </location>
</feature>
<feature type="transmembrane region" description="Helical" evidence="1">
    <location>
        <begin position="60"/>
        <end position="80"/>
    </location>
</feature>
<feature type="transmembrane region" description="Helical" evidence="1">
    <location>
        <begin position="111"/>
        <end position="131"/>
    </location>
</feature>
<feature type="transmembrane region" description="Helical" evidence="1">
    <location>
        <begin position="147"/>
        <end position="167"/>
    </location>
</feature>
<feature type="transmembrane region" description="Helical" evidence="1">
    <location>
        <begin position="173"/>
        <end position="193"/>
    </location>
</feature>
<feature type="transmembrane region" description="Helical" evidence="1">
    <location>
        <begin position="195"/>
        <end position="215"/>
    </location>
</feature>
<feature type="transmembrane region" description="Helical" evidence="1">
    <location>
        <begin position="220"/>
        <end position="240"/>
    </location>
</feature>
<feature type="transmembrane region" description="Helical" evidence="1">
    <location>
        <begin position="328"/>
        <end position="348"/>
    </location>
</feature>
<feature type="transmembrane region" description="Helical" evidence="1">
    <location>
        <begin position="362"/>
        <end position="382"/>
    </location>
</feature>
<organism>
    <name type="scientific">Haemophilus influenzae (strain ATCC 51907 / DSM 11121 / KW20 / Rd)</name>
    <dbReference type="NCBI Taxonomy" id="71421"/>
    <lineage>
        <taxon>Bacteria</taxon>
        <taxon>Pseudomonadati</taxon>
        <taxon>Pseudomonadota</taxon>
        <taxon>Gammaproteobacteria</taxon>
        <taxon>Pasteurellales</taxon>
        <taxon>Pasteurellaceae</taxon>
        <taxon>Haemophilus</taxon>
    </lineage>
</organism>
<name>Y874_HAEIN</name>
<protein>
    <recommendedName>
        <fullName>Uncharacterized protein HI_0874</fullName>
    </recommendedName>
</protein>
<proteinExistence type="predicted"/>
<comment type="subcellular location">
    <subcellularLocation>
        <location evidence="2">Cell membrane</location>
        <topology evidence="2">Multi-pass membrane protein</topology>
    </subcellularLocation>
</comment>